<protein>
    <recommendedName>
        <fullName evidence="9">Voltage-gated purine nucleotide uniporter SLC17A9</fullName>
    </recommendedName>
    <alternativeName>
        <fullName evidence="10">Solute carrier family 17 member 9</fullName>
    </alternativeName>
    <alternativeName>
        <fullName evidence="7">Vesicular nucleotide transporter</fullName>
        <shortName evidence="7">VNUT</shortName>
    </alternativeName>
</protein>
<gene>
    <name evidence="10" type="primary">Slc17a9</name>
</gene>
<organism>
    <name type="scientific">Rattus norvegicus</name>
    <name type="common">Rat</name>
    <dbReference type="NCBI Taxonomy" id="10116"/>
    <lineage>
        <taxon>Eukaryota</taxon>
        <taxon>Metazoa</taxon>
        <taxon>Chordata</taxon>
        <taxon>Craniata</taxon>
        <taxon>Vertebrata</taxon>
        <taxon>Euteleostomi</taxon>
        <taxon>Mammalia</taxon>
        <taxon>Eutheria</taxon>
        <taxon>Euarchontoglires</taxon>
        <taxon>Glires</taxon>
        <taxon>Rodentia</taxon>
        <taxon>Myomorpha</taxon>
        <taxon>Muroidea</taxon>
        <taxon>Muridae</taxon>
        <taxon>Murinae</taxon>
        <taxon>Rattus</taxon>
    </lineage>
</organism>
<feature type="chain" id="PRO_0000458211" description="Voltage-gated purine nucleotide uniporter SLC17A9">
    <location>
        <begin position="1"/>
        <end position="447"/>
    </location>
</feature>
<feature type="transmembrane region" description="Helical" evidence="3">
    <location>
        <begin position="36"/>
        <end position="58"/>
    </location>
</feature>
<feature type="transmembrane region" description="Helical" evidence="3">
    <location>
        <begin position="74"/>
        <end position="94"/>
    </location>
</feature>
<feature type="transmembrane region" description="Helical" evidence="3">
    <location>
        <begin position="103"/>
        <end position="123"/>
    </location>
</feature>
<feature type="transmembrane region" description="Helical" evidence="3">
    <location>
        <begin position="129"/>
        <end position="149"/>
    </location>
</feature>
<feature type="transmembrane region" description="Helical" evidence="3">
    <location>
        <begin position="169"/>
        <end position="189"/>
    </location>
</feature>
<feature type="transmembrane region" description="Helical" evidence="3">
    <location>
        <begin position="197"/>
        <end position="217"/>
    </location>
</feature>
<feature type="transmembrane region" description="Helical" evidence="3">
    <location>
        <begin position="252"/>
        <end position="272"/>
    </location>
</feature>
<feature type="transmembrane region" description="Helical" evidence="3">
    <location>
        <begin position="287"/>
        <end position="307"/>
    </location>
</feature>
<feature type="transmembrane region" description="Helical" evidence="3">
    <location>
        <begin position="327"/>
        <end position="347"/>
    </location>
</feature>
<feature type="transmembrane region" description="Helical" evidence="3">
    <location>
        <begin position="380"/>
        <end position="400"/>
    </location>
</feature>
<feature type="transmembrane region" description="Helical" evidence="3">
    <location>
        <begin position="413"/>
        <end position="433"/>
    </location>
</feature>
<feature type="region of interest" description="Disordered" evidence="4">
    <location>
        <begin position="1"/>
        <end position="26"/>
    </location>
</feature>
<feature type="compositionally biased region" description="Basic and acidic residues" evidence="4">
    <location>
        <begin position="14"/>
        <end position="26"/>
    </location>
</feature>
<evidence type="ECO:0000250" key="1">
    <source>
        <dbReference type="UniProtKB" id="Q8VCL5"/>
    </source>
</evidence>
<evidence type="ECO:0000250" key="2">
    <source>
        <dbReference type="UniProtKB" id="Q9BYT1"/>
    </source>
</evidence>
<evidence type="ECO:0000255" key="3"/>
<evidence type="ECO:0000256" key="4">
    <source>
        <dbReference type="SAM" id="MobiDB-lite"/>
    </source>
</evidence>
<evidence type="ECO:0000269" key="5">
    <source>
    </source>
</evidence>
<evidence type="ECO:0000269" key="6">
    <source>
    </source>
</evidence>
<evidence type="ECO:0000303" key="7">
    <source>
    </source>
</evidence>
<evidence type="ECO:0000305" key="8"/>
<evidence type="ECO:0000305" key="9">
    <source>
    </source>
</evidence>
<evidence type="ECO:0000312" key="10">
    <source>
        <dbReference type="RGD" id="1311940"/>
    </source>
</evidence>
<reference key="1">
    <citation type="journal article" date="2004" name="Nature">
        <title>Genome sequence of the Brown Norway rat yields insights into mammalian evolution.</title>
        <authorList>
            <person name="Gibbs R.A."/>
            <person name="Weinstock G.M."/>
            <person name="Metzker M.L."/>
            <person name="Muzny D.M."/>
            <person name="Sodergren E.J."/>
            <person name="Scherer S."/>
            <person name="Scott G."/>
            <person name="Steffen D."/>
            <person name="Worley K.C."/>
            <person name="Burch P.E."/>
            <person name="Okwuonu G."/>
            <person name="Hines S."/>
            <person name="Lewis L."/>
            <person name="Deramo C."/>
            <person name="Delgado O."/>
            <person name="Dugan-Rocha S."/>
            <person name="Miner G."/>
            <person name="Morgan M."/>
            <person name="Hawes A."/>
            <person name="Gill R."/>
            <person name="Holt R.A."/>
            <person name="Adams M.D."/>
            <person name="Amanatides P.G."/>
            <person name="Baden-Tillson H."/>
            <person name="Barnstead M."/>
            <person name="Chin S."/>
            <person name="Evans C.A."/>
            <person name="Ferriera S."/>
            <person name="Fosler C."/>
            <person name="Glodek A."/>
            <person name="Gu Z."/>
            <person name="Jennings D."/>
            <person name="Kraft C.L."/>
            <person name="Nguyen T."/>
            <person name="Pfannkoch C.M."/>
            <person name="Sitter C."/>
            <person name="Sutton G.G."/>
            <person name="Venter J.C."/>
            <person name="Woodage T."/>
            <person name="Smith D."/>
            <person name="Lee H.-M."/>
            <person name="Gustafson E."/>
            <person name="Cahill P."/>
            <person name="Kana A."/>
            <person name="Doucette-Stamm L."/>
            <person name="Weinstock K."/>
            <person name="Fechtel K."/>
            <person name="Weiss R.B."/>
            <person name="Dunn D.M."/>
            <person name="Green E.D."/>
            <person name="Blakesley R.W."/>
            <person name="Bouffard G.G."/>
            <person name="De Jong P.J."/>
            <person name="Osoegawa K."/>
            <person name="Zhu B."/>
            <person name="Marra M."/>
            <person name="Schein J."/>
            <person name="Bosdet I."/>
            <person name="Fjell C."/>
            <person name="Jones S."/>
            <person name="Krzywinski M."/>
            <person name="Mathewson C."/>
            <person name="Siddiqui A."/>
            <person name="Wye N."/>
            <person name="McPherson J."/>
            <person name="Zhao S."/>
            <person name="Fraser C.M."/>
            <person name="Shetty J."/>
            <person name="Shatsman S."/>
            <person name="Geer K."/>
            <person name="Chen Y."/>
            <person name="Abramzon S."/>
            <person name="Nierman W.C."/>
            <person name="Havlak P.H."/>
            <person name="Chen R."/>
            <person name="Durbin K.J."/>
            <person name="Egan A."/>
            <person name="Ren Y."/>
            <person name="Song X.-Z."/>
            <person name="Li B."/>
            <person name="Liu Y."/>
            <person name="Qin X."/>
            <person name="Cawley S."/>
            <person name="Cooney A.J."/>
            <person name="D'Souza L.M."/>
            <person name="Martin K."/>
            <person name="Wu J.Q."/>
            <person name="Gonzalez-Garay M.L."/>
            <person name="Jackson A.R."/>
            <person name="Kalafus K.J."/>
            <person name="McLeod M.P."/>
            <person name="Milosavljevic A."/>
            <person name="Virk D."/>
            <person name="Volkov A."/>
            <person name="Wheeler D.A."/>
            <person name="Zhang Z."/>
            <person name="Bailey J.A."/>
            <person name="Eichler E.E."/>
            <person name="Tuzun E."/>
            <person name="Birney E."/>
            <person name="Mongin E."/>
            <person name="Ureta-Vidal A."/>
            <person name="Woodwark C."/>
            <person name="Zdobnov E."/>
            <person name="Bork P."/>
            <person name="Suyama M."/>
            <person name="Torrents D."/>
            <person name="Alexandersson M."/>
            <person name="Trask B.J."/>
            <person name="Young J.M."/>
            <person name="Huang H."/>
            <person name="Wang H."/>
            <person name="Xing H."/>
            <person name="Daniels S."/>
            <person name="Gietzen D."/>
            <person name="Schmidt J."/>
            <person name="Stevens K."/>
            <person name="Vitt U."/>
            <person name="Wingrove J."/>
            <person name="Camara F."/>
            <person name="Mar Alba M."/>
            <person name="Abril J.F."/>
            <person name="Guigo R."/>
            <person name="Smit A."/>
            <person name="Dubchak I."/>
            <person name="Rubin E.M."/>
            <person name="Couronne O."/>
            <person name="Poliakov A."/>
            <person name="Huebner N."/>
            <person name="Ganten D."/>
            <person name="Goesele C."/>
            <person name="Hummel O."/>
            <person name="Kreitler T."/>
            <person name="Lee Y.-A."/>
            <person name="Monti J."/>
            <person name="Schulz H."/>
            <person name="Zimdahl H."/>
            <person name="Himmelbauer H."/>
            <person name="Lehrach H."/>
            <person name="Jacob H.J."/>
            <person name="Bromberg S."/>
            <person name="Gullings-Handley J."/>
            <person name="Jensen-Seaman M.I."/>
            <person name="Kwitek A.E."/>
            <person name="Lazar J."/>
            <person name="Pasko D."/>
            <person name="Tonellato P.J."/>
            <person name="Twigger S."/>
            <person name="Ponting C.P."/>
            <person name="Duarte J.M."/>
            <person name="Rice S."/>
            <person name="Goodstadt L."/>
            <person name="Beatson S.A."/>
            <person name="Emes R.D."/>
            <person name="Winter E.E."/>
            <person name="Webber C."/>
            <person name="Brandt P."/>
            <person name="Nyakatura G."/>
            <person name="Adetobi M."/>
            <person name="Chiaromonte F."/>
            <person name="Elnitski L."/>
            <person name="Eswara P."/>
            <person name="Hardison R.C."/>
            <person name="Hou M."/>
            <person name="Kolbe D."/>
            <person name="Makova K."/>
            <person name="Miller W."/>
            <person name="Nekrutenko A."/>
            <person name="Riemer C."/>
            <person name="Schwartz S."/>
            <person name="Taylor J."/>
            <person name="Yang S."/>
            <person name="Zhang Y."/>
            <person name="Lindpaintner K."/>
            <person name="Andrews T.D."/>
            <person name="Caccamo M."/>
            <person name="Clamp M."/>
            <person name="Clarke L."/>
            <person name="Curwen V."/>
            <person name="Durbin R.M."/>
            <person name="Eyras E."/>
            <person name="Searle S.M."/>
            <person name="Cooper G.M."/>
            <person name="Batzoglou S."/>
            <person name="Brudno M."/>
            <person name="Sidow A."/>
            <person name="Stone E.A."/>
            <person name="Payseur B.A."/>
            <person name="Bourque G."/>
            <person name="Lopez-Otin C."/>
            <person name="Puente X.S."/>
            <person name="Chakrabarti K."/>
            <person name="Chatterji S."/>
            <person name="Dewey C."/>
            <person name="Pachter L."/>
            <person name="Bray N."/>
            <person name="Yap V.B."/>
            <person name="Caspi A."/>
            <person name="Tesler G."/>
            <person name="Pevzner P.A."/>
            <person name="Haussler D."/>
            <person name="Roskin K.M."/>
            <person name="Baertsch R."/>
            <person name="Clawson H."/>
            <person name="Furey T.S."/>
            <person name="Hinrichs A.S."/>
            <person name="Karolchik D."/>
            <person name="Kent W.J."/>
            <person name="Rosenbloom K.R."/>
            <person name="Trumbower H."/>
            <person name="Weirauch M."/>
            <person name="Cooper D.N."/>
            <person name="Stenson P.D."/>
            <person name="Ma B."/>
            <person name="Brent M."/>
            <person name="Arumugam M."/>
            <person name="Shteynberg D."/>
            <person name="Copley R.R."/>
            <person name="Taylor M.S."/>
            <person name="Riethman H."/>
            <person name="Mudunuri U."/>
            <person name="Peterson J."/>
            <person name="Guyer M."/>
            <person name="Felsenfeld A."/>
            <person name="Old S."/>
            <person name="Mockrin S."/>
            <person name="Collins F.S."/>
        </authorList>
    </citation>
    <scope>NUCLEOTIDE SEQUENCE [LARGE SCALE GENOMIC DNA]</scope>
    <source>
        <strain>Brown Norway</strain>
    </source>
</reference>
<reference key="2">
    <citation type="journal article" date="2008" name="Proc. Natl. Acad. Sci. U.S.A.">
        <title>Identification of a vesicular nucleotide transporter.</title>
        <authorList>
            <person name="Sawada K."/>
            <person name="Echigo N."/>
            <person name="Juge N."/>
            <person name="Miyaji T."/>
            <person name="Otsuka M."/>
            <person name="Omote H."/>
            <person name="Yamamoto A."/>
            <person name="Moriyama Y."/>
        </authorList>
    </citation>
    <scope>FUNCTION</scope>
    <scope>TRANSPORTER ACTIVITY</scope>
</reference>
<reference key="3">
    <citation type="journal article" date="2013" name="Glia">
        <title>Microglia release ATP by exocytosis.</title>
        <authorList>
            <person name="Imura Y."/>
            <person name="Morizawa Y."/>
            <person name="Komatsu R."/>
            <person name="Shibata K."/>
            <person name="Shinozaki Y."/>
            <person name="Kasai H."/>
            <person name="Moriishi K."/>
            <person name="Moriyama Y."/>
            <person name="Koizumi S."/>
        </authorList>
    </citation>
    <scope>SUBCELLULAR LOCATION</scope>
</reference>
<accession>P0DX21</accession>
<dbReference type="EMBL" id="AABR07054982">
    <property type="status" value="NOT_ANNOTATED_CDS"/>
    <property type="molecule type" value="Genomic_DNA"/>
</dbReference>
<dbReference type="RefSeq" id="NP_001102083.1">
    <property type="nucleotide sequence ID" value="NM_001108613.1"/>
</dbReference>
<dbReference type="RefSeq" id="XP_063140308.1">
    <property type="nucleotide sequence ID" value="XM_063284238.1"/>
</dbReference>
<dbReference type="SMR" id="P0DX21"/>
<dbReference type="PhosphoSitePlus" id="P0DX21"/>
<dbReference type="Ensembl" id="ENSRNOT00000013623.6">
    <property type="protein sequence ID" value="ENSRNOP00000013621.4"/>
    <property type="gene ID" value="ENSRNOG00000010275.7"/>
</dbReference>
<dbReference type="Ensembl" id="ENSRNOT00055001823">
    <property type="protein sequence ID" value="ENSRNOP00055001423"/>
    <property type="gene ID" value="ENSRNOG00055001105"/>
</dbReference>
<dbReference type="Ensembl" id="ENSRNOT00060002121">
    <property type="protein sequence ID" value="ENSRNOP00060001316"/>
    <property type="gene ID" value="ENSRNOG00060001442"/>
</dbReference>
<dbReference type="Ensembl" id="ENSRNOT00065024074">
    <property type="protein sequence ID" value="ENSRNOP00065018776"/>
    <property type="gene ID" value="ENSRNOG00065014571"/>
</dbReference>
<dbReference type="GeneID" id="362287"/>
<dbReference type="KEGG" id="rno:362287"/>
<dbReference type="AGR" id="RGD:1311940"/>
<dbReference type="CTD" id="63910"/>
<dbReference type="RGD" id="1311940">
    <property type="gene designation" value="Slc17a9"/>
</dbReference>
<dbReference type="GeneTree" id="ENSGT00940000158186"/>
<dbReference type="HOGENOM" id="CLU_001265_5_11_1"/>
<dbReference type="OMA" id="LITFWMP"/>
<dbReference type="OrthoDB" id="2985014at2759"/>
<dbReference type="TreeFam" id="TF313341"/>
<dbReference type="PRO" id="PR:P0DX21"/>
<dbReference type="Proteomes" id="UP000002494">
    <property type="component" value="Chromosome 3"/>
</dbReference>
<dbReference type="GO" id="GO:0042584">
    <property type="term" value="C:chromaffin granule membrane"/>
    <property type="evidence" value="ECO:0000266"/>
    <property type="project" value="RGD"/>
</dbReference>
<dbReference type="GO" id="GO:0005765">
    <property type="term" value="C:lysosomal membrane"/>
    <property type="evidence" value="ECO:0000266"/>
    <property type="project" value="RGD"/>
</dbReference>
<dbReference type="GO" id="GO:0098594">
    <property type="term" value="C:mucin granule"/>
    <property type="evidence" value="ECO:0000266"/>
    <property type="project" value="RGD"/>
</dbReference>
<dbReference type="GO" id="GO:0030141">
    <property type="term" value="C:secretory granule"/>
    <property type="evidence" value="ECO:0000266"/>
    <property type="project" value="RGD"/>
</dbReference>
<dbReference type="GO" id="GO:0030658">
    <property type="term" value="C:transport vesicle membrane"/>
    <property type="evidence" value="ECO:0007669"/>
    <property type="project" value="UniProtKB-SubCell"/>
</dbReference>
<dbReference type="GO" id="GO:0015217">
    <property type="term" value="F:ADP transmembrane transporter activity"/>
    <property type="evidence" value="ECO:0000266"/>
    <property type="project" value="RGD"/>
</dbReference>
<dbReference type="GO" id="GO:0005347">
    <property type="term" value="F:ATP transmembrane transporter activity"/>
    <property type="evidence" value="ECO:0000266"/>
    <property type="project" value="RGD"/>
</dbReference>
<dbReference type="GO" id="GO:0001409">
    <property type="term" value="F:guanine nucleotide transmembrane transporter activity"/>
    <property type="evidence" value="ECO:0000266"/>
    <property type="project" value="RGD"/>
</dbReference>
<dbReference type="GO" id="GO:0160042">
    <property type="term" value="F:purine nucleotide uniporter activity"/>
    <property type="evidence" value="ECO:0000266"/>
    <property type="project" value="RGD"/>
</dbReference>
<dbReference type="GO" id="GO:0015866">
    <property type="term" value="P:ADP transport"/>
    <property type="evidence" value="ECO:0000266"/>
    <property type="project" value="RGD"/>
</dbReference>
<dbReference type="GO" id="GO:1904669">
    <property type="term" value="P:ATP export"/>
    <property type="evidence" value="ECO:0000266"/>
    <property type="project" value="RGD"/>
</dbReference>
<dbReference type="GO" id="GO:0015867">
    <property type="term" value="P:ATP transport"/>
    <property type="evidence" value="ECO:0000266"/>
    <property type="project" value="RGD"/>
</dbReference>
<dbReference type="GO" id="GO:1903790">
    <property type="term" value="P:guanine nucleotide transmembrane transport"/>
    <property type="evidence" value="ECO:0000266"/>
    <property type="project" value="RGD"/>
</dbReference>
<dbReference type="GO" id="GO:1905146">
    <property type="term" value="P:lysosomal protein catabolic process"/>
    <property type="evidence" value="ECO:0000266"/>
    <property type="project" value="RGD"/>
</dbReference>
<dbReference type="GO" id="GO:0141013">
    <property type="term" value="P:purine nucleotide import into lysosome"/>
    <property type="evidence" value="ECO:0000266"/>
    <property type="project" value="RGD"/>
</dbReference>
<dbReference type="CDD" id="cd17380">
    <property type="entry name" value="MFS_SLC17A9_like"/>
    <property type="match status" value="1"/>
</dbReference>
<dbReference type="FunFam" id="1.20.1250.20:FF:000059">
    <property type="entry name" value="Solute carrier family 17 member 9"/>
    <property type="match status" value="1"/>
</dbReference>
<dbReference type="FunFam" id="1.20.1250.20:FF:000150">
    <property type="entry name" value="Solute carrier family 17 member 9"/>
    <property type="match status" value="1"/>
</dbReference>
<dbReference type="Gene3D" id="1.20.1250.20">
    <property type="entry name" value="MFS general substrate transporter like domains"/>
    <property type="match status" value="2"/>
</dbReference>
<dbReference type="InterPro" id="IPR011701">
    <property type="entry name" value="MFS"/>
</dbReference>
<dbReference type="InterPro" id="IPR020846">
    <property type="entry name" value="MFS_dom"/>
</dbReference>
<dbReference type="InterPro" id="IPR050382">
    <property type="entry name" value="MFS_Na/Anion_cotransporter"/>
</dbReference>
<dbReference type="InterPro" id="IPR036259">
    <property type="entry name" value="MFS_trans_sf"/>
</dbReference>
<dbReference type="InterPro" id="IPR044777">
    <property type="entry name" value="SLC17A9-like"/>
</dbReference>
<dbReference type="InterPro" id="IPR005829">
    <property type="entry name" value="Sugar_transporter_CS"/>
</dbReference>
<dbReference type="PANTHER" id="PTHR11662">
    <property type="entry name" value="SOLUTE CARRIER FAMILY 17"/>
    <property type="match status" value="1"/>
</dbReference>
<dbReference type="PANTHER" id="PTHR11662:SF279">
    <property type="entry name" value="VOLTAGE-GATED PURINE NUCLEOTIDE UNIPORTER SLC17A9"/>
    <property type="match status" value="1"/>
</dbReference>
<dbReference type="Pfam" id="PF07690">
    <property type="entry name" value="MFS_1"/>
    <property type="match status" value="1"/>
</dbReference>
<dbReference type="SUPFAM" id="SSF103473">
    <property type="entry name" value="MFS general substrate transporter"/>
    <property type="match status" value="1"/>
</dbReference>
<dbReference type="PROSITE" id="PS50850">
    <property type="entry name" value="MFS"/>
    <property type="match status" value="1"/>
</dbReference>
<dbReference type="PROSITE" id="PS00217">
    <property type="entry name" value="SUGAR_TRANSPORT_2"/>
    <property type="match status" value="1"/>
</dbReference>
<comment type="function">
    <text evidence="1 5">Voltage-gated ATP nucleotide uniporter that can also transport the purine nucleotides ADP and GTP. Uses the membrane potential as the driving force to control ATP accumulation in lysosomes and secretory vesicles (PubMed:18375752). By controlling ATP storage in lysosomes, regulates ATP-dependent proteins of these organelles (By similarity). Also indirectly regulates the exocytosis of ATP through its import into lysosomes in astrocytes and secretory vesicles such as adrenal chromaffin granules, mucin granules and synaptic vesicles (PubMed:18375752).</text>
</comment>
<comment type="catalytic activity">
    <reaction evidence="5">
        <text>ATP(in) = ATP(out)</text>
        <dbReference type="Rhea" id="RHEA:75687"/>
        <dbReference type="ChEBI" id="CHEBI:30616"/>
    </reaction>
</comment>
<comment type="catalytic activity">
    <reaction evidence="2">
        <text>ADP(in) = ADP(out)</text>
        <dbReference type="Rhea" id="RHEA:75783"/>
        <dbReference type="ChEBI" id="CHEBI:456216"/>
    </reaction>
</comment>
<comment type="catalytic activity">
    <reaction evidence="2">
        <text>GTP(in) = GTP(out)</text>
        <dbReference type="Rhea" id="RHEA:75787"/>
        <dbReference type="ChEBI" id="CHEBI:37565"/>
    </reaction>
</comment>
<comment type="activity regulation">
    <text evidence="2">Activity is chloride-dependent.</text>
</comment>
<comment type="subcellular location">
    <subcellularLocation>
        <location evidence="1">Cytoplasmic vesicle</location>
        <location evidence="1">Secretory vesicle</location>
        <location evidence="1">Chromaffin granule membrane</location>
        <topology evidence="3">Multi-pass membrane protein</topology>
    </subcellularLocation>
    <subcellularLocation>
        <location evidence="1">Cytoplasmic vesicle</location>
        <location evidence="1">Secretory vesicle membrane</location>
        <topology evidence="3">Multi-pass membrane protein</topology>
    </subcellularLocation>
    <subcellularLocation>
        <location evidence="1">Lysosome membrane</location>
        <topology evidence="3">Multi-pass membrane protein</topology>
    </subcellularLocation>
    <text evidence="2 6">Localizes to mucin granules and vesicles (By similarity). Localization to lysosomes was not confirmed in microglial cells (PubMed:23832620).</text>
</comment>
<comment type="similarity">
    <text evidence="8">Belongs to the major facilitator superfamily. Sodium/anion cotransporter family.</text>
</comment>
<name>S17A9_RAT</name>
<sequence>MPSQRSSLMQPIPEETRKTPSAAAEDKRWSRPECQLWTGMLLLGTCLLYCTRVTMPVCTVAMSQDFGWNKKEAGIVLSSFFWGYCLTQVVGGHLGDRIGGEKVILLSASAWGFITVTTPLLAHLGSGHLAFVTFSRILTGLLQGVYFPALTSLLSQRVQESERSFTYSTVGAGSQVGTLVTGGIGSVLLDRCGWQSVFYFSGGLTLLWVYYVYKYLLDEKDLVLALGVLAQGLPVTRPSKVPWRQLFRKASVWAVICSQLSSACSFFILLSWLPTFFKETFPHSKGWVFNVVPWLLAIPASLFSGFISDRLISQGYRVITVRKFMQVMGLGLSSIFALCLGHTTSFLKSMIFASASIGFQTFNHSGISVNIQDLAPSCAGFLFGVANTAGALAGVVGVCLGGYLIETTGSWTCVFHLVAIVSNLGLGTFLVFGKAQRVDLVPTHEDL</sequence>
<keyword id="KW-0968">Cytoplasmic vesicle</keyword>
<keyword id="KW-0458">Lysosome</keyword>
<keyword id="KW-0472">Membrane</keyword>
<keyword id="KW-1185">Reference proteome</keyword>
<keyword id="KW-0812">Transmembrane</keyword>
<keyword id="KW-1133">Transmembrane helix</keyword>
<keyword id="KW-0813">Transport</keyword>
<proteinExistence type="inferred from homology"/>